<gene>
    <name evidence="1" type="primary">panC</name>
    <name type="ordered locus">XOO2244</name>
</gene>
<organism>
    <name type="scientific">Xanthomonas oryzae pv. oryzae (strain MAFF 311018)</name>
    <dbReference type="NCBI Taxonomy" id="342109"/>
    <lineage>
        <taxon>Bacteria</taxon>
        <taxon>Pseudomonadati</taxon>
        <taxon>Pseudomonadota</taxon>
        <taxon>Gammaproteobacteria</taxon>
        <taxon>Lysobacterales</taxon>
        <taxon>Lysobacteraceae</taxon>
        <taxon>Xanthomonas</taxon>
    </lineage>
</organism>
<dbReference type="EC" id="6.3.2.1" evidence="1"/>
<dbReference type="EMBL" id="AP008229">
    <property type="protein sequence ID" value="BAE68999.1"/>
    <property type="molecule type" value="Genomic_DNA"/>
</dbReference>
<dbReference type="RefSeq" id="WP_011408566.1">
    <property type="nucleotide sequence ID" value="NC_007705.1"/>
</dbReference>
<dbReference type="SMR" id="Q2P378"/>
<dbReference type="KEGG" id="xom:XOO2244"/>
<dbReference type="HOGENOM" id="CLU_047148_0_0_6"/>
<dbReference type="UniPathway" id="UPA00028">
    <property type="reaction ID" value="UER00005"/>
</dbReference>
<dbReference type="GO" id="GO:0005829">
    <property type="term" value="C:cytosol"/>
    <property type="evidence" value="ECO:0007669"/>
    <property type="project" value="TreeGrafter"/>
</dbReference>
<dbReference type="GO" id="GO:0005524">
    <property type="term" value="F:ATP binding"/>
    <property type="evidence" value="ECO:0007669"/>
    <property type="project" value="UniProtKB-KW"/>
</dbReference>
<dbReference type="GO" id="GO:0004592">
    <property type="term" value="F:pantoate-beta-alanine ligase activity"/>
    <property type="evidence" value="ECO:0007669"/>
    <property type="project" value="UniProtKB-UniRule"/>
</dbReference>
<dbReference type="GO" id="GO:0015940">
    <property type="term" value="P:pantothenate biosynthetic process"/>
    <property type="evidence" value="ECO:0007669"/>
    <property type="project" value="UniProtKB-UniRule"/>
</dbReference>
<dbReference type="CDD" id="cd00560">
    <property type="entry name" value="PanC"/>
    <property type="match status" value="1"/>
</dbReference>
<dbReference type="FunFam" id="3.40.50.620:FF:000114">
    <property type="entry name" value="Pantothenate synthetase"/>
    <property type="match status" value="1"/>
</dbReference>
<dbReference type="Gene3D" id="3.40.50.620">
    <property type="entry name" value="HUPs"/>
    <property type="match status" value="1"/>
</dbReference>
<dbReference type="Gene3D" id="3.30.1300.10">
    <property type="entry name" value="Pantoate-beta-alanine ligase, C-terminal domain"/>
    <property type="match status" value="1"/>
</dbReference>
<dbReference type="HAMAP" id="MF_00158">
    <property type="entry name" value="PanC"/>
    <property type="match status" value="1"/>
</dbReference>
<dbReference type="InterPro" id="IPR003721">
    <property type="entry name" value="Pantoate_ligase"/>
</dbReference>
<dbReference type="InterPro" id="IPR042176">
    <property type="entry name" value="Pantoate_ligase_C"/>
</dbReference>
<dbReference type="InterPro" id="IPR014729">
    <property type="entry name" value="Rossmann-like_a/b/a_fold"/>
</dbReference>
<dbReference type="NCBIfam" id="TIGR00018">
    <property type="entry name" value="panC"/>
    <property type="match status" value="1"/>
</dbReference>
<dbReference type="PANTHER" id="PTHR21299">
    <property type="entry name" value="CYTIDYLATE KINASE/PANTOATE-BETA-ALANINE LIGASE"/>
    <property type="match status" value="1"/>
</dbReference>
<dbReference type="PANTHER" id="PTHR21299:SF1">
    <property type="entry name" value="PANTOATE--BETA-ALANINE LIGASE"/>
    <property type="match status" value="1"/>
</dbReference>
<dbReference type="Pfam" id="PF02569">
    <property type="entry name" value="Pantoate_ligase"/>
    <property type="match status" value="1"/>
</dbReference>
<dbReference type="SUPFAM" id="SSF52374">
    <property type="entry name" value="Nucleotidylyl transferase"/>
    <property type="match status" value="1"/>
</dbReference>
<protein>
    <recommendedName>
        <fullName evidence="1">Pantothenate synthetase</fullName>
        <shortName evidence="1">PS</shortName>
        <ecNumber evidence="1">6.3.2.1</ecNumber>
    </recommendedName>
    <alternativeName>
        <fullName evidence="1">Pantoate--beta-alanine ligase</fullName>
    </alternativeName>
    <alternativeName>
        <fullName evidence="1">Pantoate-activating enzyme</fullName>
    </alternativeName>
</protein>
<sequence>MIQTLTDLSALRALVNGWKREGLRVALVPTMGNLHVGHYSLVMLARQYADRVVSSVFVNPTQFGPNEDFACYPRTPEADLRGLEDAGCDALWLPDVDTMYPLGTALATPIHAPGVSDVLEGECRPGHFDGVCTVVARLFNQVQPDVAAFGKKDYQQLAVIRQMVADLAFPIEILGGSIVREADGLAMSSRNQYLSAEERPTSANIHKVLLQMRDSYAVGTPRAQVEDAASHALEQAGFRVDYAVVRLPDLSEPGDGHTGAHVALIAARLGSTRLIDNLEF</sequence>
<proteinExistence type="inferred from homology"/>
<name>PANC_XANOM</name>
<keyword id="KW-0067">ATP-binding</keyword>
<keyword id="KW-0963">Cytoplasm</keyword>
<keyword id="KW-0436">Ligase</keyword>
<keyword id="KW-0547">Nucleotide-binding</keyword>
<keyword id="KW-0566">Pantothenate biosynthesis</keyword>
<accession>Q2P378</accession>
<reference key="1">
    <citation type="journal article" date="2005" name="Jpn. Agric. Res. Q.">
        <title>Genome sequence of Xanthomonas oryzae pv. oryzae suggests contribution of large numbers of effector genes and insertion sequences to its race diversity.</title>
        <authorList>
            <person name="Ochiai H."/>
            <person name="Inoue Y."/>
            <person name="Takeya M."/>
            <person name="Sasaki A."/>
            <person name="Kaku H."/>
        </authorList>
    </citation>
    <scope>NUCLEOTIDE SEQUENCE [LARGE SCALE GENOMIC DNA]</scope>
    <source>
        <strain>MAFF 311018</strain>
    </source>
</reference>
<evidence type="ECO:0000255" key="1">
    <source>
        <dbReference type="HAMAP-Rule" id="MF_00158"/>
    </source>
</evidence>
<comment type="function">
    <text evidence="1">Catalyzes the condensation of pantoate with beta-alanine in an ATP-dependent reaction via a pantoyl-adenylate intermediate.</text>
</comment>
<comment type="catalytic activity">
    <reaction evidence="1">
        <text>(R)-pantoate + beta-alanine + ATP = (R)-pantothenate + AMP + diphosphate + H(+)</text>
        <dbReference type="Rhea" id="RHEA:10912"/>
        <dbReference type="ChEBI" id="CHEBI:15378"/>
        <dbReference type="ChEBI" id="CHEBI:15980"/>
        <dbReference type="ChEBI" id="CHEBI:29032"/>
        <dbReference type="ChEBI" id="CHEBI:30616"/>
        <dbReference type="ChEBI" id="CHEBI:33019"/>
        <dbReference type="ChEBI" id="CHEBI:57966"/>
        <dbReference type="ChEBI" id="CHEBI:456215"/>
        <dbReference type="EC" id="6.3.2.1"/>
    </reaction>
</comment>
<comment type="pathway">
    <text evidence="1">Cofactor biosynthesis; (R)-pantothenate biosynthesis; (R)-pantothenate from (R)-pantoate and beta-alanine: step 1/1.</text>
</comment>
<comment type="subunit">
    <text evidence="1">Homodimer.</text>
</comment>
<comment type="subcellular location">
    <subcellularLocation>
        <location evidence="1">Cytoplasm</location>
    </subcellularLocation>
</comment>
<comment type="miscellaneous">
    <text evidence="1">The reaction proceeds by a bi uni uni bi ping pong mechanism.</text>
</comment>
<comment type="similarity">
    <text evidence="1">Belongs to the pantothenate synthetase family.</text>
</comment>
<feature type="chain" id="PRO_0000305578" description="Pantothenate synthetase">
    <location>
        <begin position="1"/>
        <end position="280"/>
    </location>
</feature>
<feature type="active site" description="Proton donor" evidence="1">
    <location>
        <position position="38"/>
    </location>
</feature>
<feature type="binding site" evidence="1">
    <location>
        <begin position="31"/>
        <end position="38"/>
    </location>
    <ligand>
        <name>ATP</name>
        <dbReference type="ChEBI" id="CHEBI:30616"/>
    </ligand>
</feature>
<feature type="binding site" evidence="1">
    <location>
        <position position="62"/>
    </location>
    <ligand>
        <name>(R)-pantoate</name>
        <dbReference type="ChEBI" id="CHEBI:15980"/>
    </ligand>
</feature>
<feature type="binding site" evidence="1">
    <location>
        <position position="62"/>
    </location>
    <ligand>
        <name>beta-alanine</name>
        <dbReference type="ChEBI" id="CHEBI:57966"/>
    </ligand>
</feature>
<feature type="binding site" evidence="1">
    <location>
        <begin position="150"/>
        <end position="153"/>
    </location>
    <ligand>
        <name>ATP</name>
        <dbReference type="ChEBI" id="CHEBI:30616"/>
    </ligand>
</feature>
<feature type="binding site" evidence="1">
    <location>
        <position position="156"/>
    </location>
    <ligand>
        <name>(R)-pantoate</name>
        <dbReference type="ChEBI" id="CHEBI:15980"/>
    </ligand>
</feature>
<feature type="binding site" evidence="1">
    <location>
        <position position="179"/>
    </location>
    <ligand>
        <name>ATP</name>
        <dbReference type="ChEBI" id="CHEBI:30616"/>
    </ligand>
</feature>
<feature type="binding site" evidence="1">
    <location>
        <begin position="187"/>
        <end position="190"/>
    </location>
    <ligand>
        <name>ATP</name>
        <dbReference type="ChEBI" id="CHEBI:30616"/>
    </ligand>
</feature>